<feature type="initiator methionine" description="Removed" evidence="1">
    <location>
        <position position="1"/>
    </location>
</feature>
<feature type="chain" id="PRO_0000135396" description="Glutamine--fructose-6-phosphate aminotransferase [isomerizing]">
    <location>
        <begin position="2"/>
        <end position="604"/>
    </location>
</feature>
<feature type="domain" description="Glutamine amidotransferase type-2" evidence="1">
    <location>
        <begin position="2"/>
        <end position="218"/>
    </location>
</feature>
<feature type="domain" description="SIS 1" evidence="1">
    <location>
        <begin position="284"/>
        <end position="423"/>
    </location>
</feature>
<feature type="domain" description="SIS 2" evidence="1">
    <location>
        <begin position="456"/>
        <end position="594"/>
    </location>
</feature>
<feature type="active site" description="Nucleophile; for GATase activity" evidence="1">
    <location>
        <position position="2"/>
    </location>
</feature>
<feature type="active site" description="For Fru-6P isomerization activity" evidence="1">
    <location>
        <position position="599"/>
    </location>
</feature>
<evidence type="ECO:0000255" key="1">
    <source>
        <dbReference type="HAMAP-Rule" id="MF_00164"/>
    </source>
</evidence>
<name>GLMS_STRP8</name>
<protein>
    <recommendedName>
        <fullName evidence="1">Glutamine--fructose-6-phosphate aminotransferase [isomerizing]</fullName>
        <ecNumber evidence="1">2.6.1.16</ecNumber>
    </recommendedName>
    <alternativeName>
        <fullName evidence="1">D-fructose-6-phosphate amidotransferase</fullName>
    </alternativeName>
    <alternativeName>
        <fullName evidence="1">GFAT</fullName>
    </alternativeName>
    <alternativeName>
        <fullName evidence="1">Glucosamine-6-phosphate synthase</fullName>
    </alternativeName>
    <alternativeName>
        <fullName evidence="1">Hexosephosphate aminotransferase</fullName>
    </alternativeName>
    <alternativeName>
        <fullName evidence="1">L-glutamine--D-fructose-6-phosphate amidotransferase</fullName>
    </alternativeName>
</protein>
<reference key="1">
    <citation type="journal article" date="2002" name="Proc. Natl. Acad. Sci. U.S.A.">
        <title>Genome sequence and comparative microarray analysis of serotype M18 group A Streptococcus strains associated with acute rheumatic fever outbreaks.</title>
        <authorList>
            <person name="Smoot J.C."/>
            <person name="Barbian K.D."/>
            <person name="Van Gompel J.J."/>
            <person name="Smoot L.M."/>
            <person name="Chaussee M.S."/>
            <person name="Sylva G.L."/>
            <person name="Sturdevant D.E."/>
            <person name="Ricklefs S.M."/>
            <person name="Porcella S.F."/>
            <person name="Parkins L.D."/>
            <person name="Beres S.B."/>
            <person name="Campbell D.S."/>
            <person name="Smith T.M."/>
            <person name="Zhang Q."/>
            <person name="Kapur V."/>
            <person name="Daly J.A."/>
            <person name="Veasy L.G."/>
            <person name="Musser J.M."/>
        </authorList>
    </citation>
    <scope>NUCLEOTIDE SEQUENCE [LARGE SCALE GENOMIC DNA]</scope>
    <source>
        <strain>MGAS8232</strain>
    </source>
</reference>
<dbReference type="EC" id="2.6.1.16" evidence="1"/>
<dbReference type="EMBL" id="AE009949">
    <property type="protein sequence ID" value="AAL97838.1"/>
    <property type="molecule type" value="Genomic_DNA"/>
</dbReference>
<dbReference type="RefSeq" id="WP_011017833.1">
    <property type="nucleotide sequence ID" value="NC_003485.1"/>
</dbReference>
<dbReference type="SMR" id="Q8P0S7"/>
<dbReference type="MEROPS" id="C44.A08"/>
<dbReference type="KEGG" id="spm:spyM18_1228"/>
<dbReference type="HOGENOM" id="CLU_012520_7_1_9"/>
<dbReference type="GO" id="GO:0005829">
    <property type="term" value="C:cytosol"/>
    <property type="evidence" value="ECO:0007669"/>
    <property type="project" value="TreeGrafter"/>
</dbReference>
<dbReference type="GO" id="GO:0097367">
    <property type="term" value="F:carbohydrate derivative binding"/>
    <property type="evidence" value="ECO:0007669"/>
    <property type="project" value="InterPro"/>
</dbReference>
<dbReference type="GO" id="GO:0004360">
    <property type="term" value="F:glutamine-fructose-6-phosphate transaminase (isomerizing) activity"/>
    <property type="evidence" value="ECO:0007669"/>
    <property type="project" value="UniProtKB-UniRule"/>
</dbReference>
<dbReference type="GO" id="GO:0005975">
    <property type="term" value="P:carbohydrate metabolic process"/>
    <property type="evidence" value="ECO:0007669"/>
    <property type="project" value="UniProtKB-UniRule"/>
</dbReference>
<dbReference type="GO" id="GO:0006002">
    <property type="term" value="P:fructose 6-phosphate metabolic process"/>
    <property type="evidence" value="ECO:0007669"/>
    <property type="project" value="TreeGrafter"/>
</dbReference>
<dbReference type="GO" id="GO:0006487">
    <property type="term" value="P:protein N-linked glycosylation"/>
    <property type="evidence" value="ECO:0007669"/>
    <property type="project" value="TreeGrafter"/>
</dbReference>
<dbReference type="GO" id="GO:0006047">
    <property type="term" value="P:UDP-N-acetylglucosamine metabolic process"/>
    <property type="evidence" value="ECO:0007669"/>
    <property type="project" value="TreeGrafter"/>
</dbReference>
<dbReference type="CDD" id="cd00714">
    <property type="entry name" value="GFAT"/>
    <property type="match status" value="1"/>
</dbReference>
<dbReference type="CDD" id="cd05008">
    <property type="entry name" value="SIS_GlmS_GlmD_1"/>
    <property type="match status" value="1"/>
</dbReference>
<dbReference type="CDD" id="cd05009">
    <property type="entry name" value="SIS_GlmS_GlmD_2"/>
    <property type="match status" value="1"/>
</dbReference>
<dbReference type="FunFam" id="3.40.50.10490:FF:000001">
    <property type="entry name" value="Glutamine--fructose-6-phosphate aminotransferase [isomerizing]"/>
    <property type="match status" value="1"/>
</dbReference>
<dbReference type="FunFam" id="3.40.50.10490:FF:000022">
    <property type="entry name" value="Glutamine--fructose-6-phosphate aminotransferase [isomerizing]"/>
    <property type="match status" value="1"/>
</dbReference>
<dbReference type="FunFam" id="3.60.20.10:FF:000006">
    <property type="entry name" value="Glutamine--fructose-6-phosphate aminotransferase [isomerizing]"/>
    <property type="match status" value="1"/>
</dbReference>
<dbReference type="Gene3D" id="3.40.50.10490">
    <property type="entry name" value="Glucose-6-phosphate isomerase like protein, domain 1"/>
    <property type="match status" value="2"/>
</dbReference>
<dbReference type="Gene3D" id="3.60.20.10">
    <property type="entry name" value="Glutamine Phosphoribosylpyrophosphate, subunit 1, domain 1"/>
    <property type="match status" value="1"/>
</dbReference>
<dbReference type="HAMAP" id="MF_00164">
    <property type="entry name" value="GlmS"/>
    <property type="match status" value="1"/>
</dbReference>
<dbReference type="InterPro" id="IPR017932">
    <property type="entry name" value="GATase_2_dom"/>
</dbReference>
<dbReference type="InterPro" id="IPR005855">
    <property type="entry name" value="GFAT"/>
</dbReference>
<dbReference type="InterPro" id="IPR047084">
    <property type="entry name" value="GFAT_N"/>
</dbReference>
<dbReference type="InterPro" id="IPR035466">
    <property type="entry name" value="GlmS/AgaS_SIS"/>
</dbReference>
<dbReference type="InterPro" id="IPR035490">
    <property type="entry name" value="GlmS/FrlB_SIS"/>
</dbReference>
<dbReference type="InterPro" id="IPR029055">
    <property type="entry name" value="Ntn_hydrolases_N"/>
</dbReference>
<dbReference type="InterPro" id="IPR001347">
    <property type="entry name" value="SIS_dom"/>
</dbReference>
<dbReference type="InterPro" id="IPR046348">
    <property type="entry name" value="SIS_dom_sf"/>
</dbReference>
<dbReference type="NCBIfam" id="TIGR01135">
    <property type="entry name" value="glmS"/>
    <property type="match status" value="1"/>
</dbReference>
<dbReference type="NCBIfam" id="NF001484">
    <property type="entry name" value="PRK00331.1"/>
    <property type="match status" value="1"/>
</dbReference>
<dbReference type="PANTHER" id="PTHR10937">
    <property type="entry name" value="GLUCOSAMINE--FRUCTOSE-6-PHOSPHATE AMINOTRANSFERASE, ISOMERIZING"/>
    <property type="match status" value="1"/>
</dbReference>
<dbReference type="PANTHER" id="PTHR10937:SF0">
    <property type="entry name" value="GLUTAMINE--FRUCTOSE-6-PHOSPHATE TRANSAMINASE (ISOMERIZING)"/>
    <property type="match status" value="1"/>
</dbReference>
<dbReference type="Pfam" id="PF13522">
    <property type="entry name" value="GATase_6"/>
    <property type="match status" value="1"/>
</dbReference>
<dbReference type="Pfam" id="PF01380">
    <property type="entry name" value="SIS"/>
    <property type="match status" value="2"/>
</dbReference>
<dbReference type="SUPFAM" id="SSF56235">
    <property type="entry name" value="N-terminal nucleophile aminohydrolases (Ntn hydrolases)"/>
    <property type="match status" value="1"/>
</dbReference>
<dbReference type="SUPFAM" id="SSF53697">
    <property type="entry name" value="SIS domain"/>
    <property type="match status" value="1"/>
</dbReference>
<dbReference type="PROSITE" id="PS51278">
    <property type="entry name" value="GATASE_TYPE_2"/>
    <property type="match status" value="1"/>
</dbReference>
<dbReference type="PROSITE" id="PS51464">
    <property type="entry name" value="SIS"/>
    <property type="match status" value="2"/>
</dbReference>
<proteinExistence type="inferred from homology"/>
<organism>
    <name type="scientific">Streptococcus pyogenes serotype M18 (strain MGAS8232)</name>
    <dbReference type="NCBI Taxonomy" id="186103"/>
    <lineage>
        <taxon>Bacteria</taxon>
        <taxon>Bacillati</taxon>
        <taxon>Bacillota</taxon>
        <taxon>Bacilli</taxon>
        <taxon>Lactobacillales</taxon>
        <taxon>Streptococcaceae</taxon>
        <taxon>Streptococcus</taxon>
    </lineage>
</organism>
<gene>
    <name evidence="1" type="primary">glmS</name>
    <name type="ordered locus">spyM18_1228</name>
</gene>
<accession>Q8P0S7</accession>
<sequence>MCGIVGVVGNRNATDILMQGLEKLEYRGYDSAGIFVANANQTNLIKSVGRIADLRAKIGIDVAGSTGIGHTRWATHGQSTEDNAHPHTSQTGRFVLVHNGVIENYLHIKTEFLAGHDFKGQTDTEIAVHLIGKFVEEDKLSVLEAFKKALSIIEGSYAFALMDSQATDTIYVAKNKSPLLIGLGEGYNMVCSDAMAMIRETSEFMEIHDKELVILTKDKVTVTDYDGKELIRDSYTAELDLSDIGKGTYPFYMLKEIDEQPTVMRQLISTYADETGNVQVDPAIITSIQEADRLYILAAGTSYHAGFATKNMLEQLTDTPVELGVASEWGYHMPLLSKKPMFILLSQSGETADSRQVLVKANAMGIPSLTVTNVPGSTLSRESTYTMLIHAGPEIAVASTKAYTAQIAALAFLAKAVGEANGKQEALDFNLVHELSLVAQSIEATLSEKDLVAEKVQALLATTRNAFYIGRGNDYYVAMEAALKLKEISYIQCEGFAAGELKHGTISLIEEDTPVIALISSSQLVASHTRGNIQEVAARGAHVLTVVEEGLDREGDDIIVNKVHPFLAPIAMVIPTQLIAYYASLQRGLDVDKPRNLAKAVTVE</sequence>
<keyword id="KW-0032">Aminotransferase</keyword>
<keyword id="KW-0963">Cytoplasm</keyword>
<keyword id="KW-0315">Glutamine amidotransferase</keyword>
<keyword id="KW-0677">Repeat</keyword>
<keyword id="KW-0808">Transferase</keyword>
<comment type="function">
    <text evidence="1">Catalyzes the first step in hexosamine metabolism, converting fructose-6P into glucosamine-6P using glutamine as a nitrogen source.</text>
</comment>
<comment type="catalytic activity">
    <reaction evidence="1">
        <text>D-fructose 6-phosphate + L-glutamine = D-glucosamine 6-phosphate + L-glutamate</text>
        <dbReference type="Rhea" id="RHEA:13237"/>
        <dbReference type="ChEBI" id="CHEBI:29985"/>
        <dbReference type="ChEBI" id="CHEBI:58359"/>
        <dbReference type="ChEBI" id="CHEBI:58725"/>
        <dbReference type="ChEBI" id="CHEBI:61527"/>
        <dbReference type="EC" id="2.6.1.16"/>
    </reaction>
</comment>
<comment type="subunit">
    <text evidence="1">Homodimer.</text>
</comment>
<comment type="subcellular location">
    <subcellularLocation>
        <location evidence="1">Cytoplasm</location>
    </subcellularLocation>
</comment>